<keyword id="KW-0028">Amino-acid biosynthesis</keyword>
<keyword id="KW-0963">Cytoplasm</keyword>
<keyword id="KW-0220">Diaminopimelate biosynthesis</keyword>
<keyword id="KW-0457">Lysine biosynthesis</keyword>
<keyword id="KW-0520">NAD</keyword>
<keyword id="KW-0521">NADP</keyword>
<keyword id="KW-0560">Oxidoreductase</keyword>
<comment type="function">
    <text evidence="1">Catalyzes the conversion of 4-hydroxy-tetrahydrodipicolinate (HTPA) to tetrahydrodipicolinate.</text>
</comment>
<comment type="catalytic activity">
    <reaction evidence="1">
        <text>(S)-2,3,4,5-tetrahydrodipicolinate + NAD(+) + H2O = (2S,4S)-4-hydroxy-2,3,4,5-tetrahydrodipicolinate + NADH + H(+)</text>
        <dbReference type="Rhea" id="RHEA:35323"/>
        <dbReference type="ChEBI" id="CHEBI:15377"/>
        <dbReference type="ChEBI" id="CHEBI:15378"/>
        <dbReference type="ChEBI" id="CHEBI:16845"/>
        <dbReference type="ChEBI" id="CHEBI:57540"/>
        <dbReference type="ChEBI" id="CHEBI:57945"/>
        <dbReference type="ChEBI" id="CHEBI:67139"/>
        <dbReference type="EC" id="1.17.1.8"/>
    </reaction>
</comment>
<comment type="catalytic activity">
    <reaction evidence="1">
        <text>(S)-2,3,4,5-tetrahydrodipicolinate + NADP(+) + H2O = (2S,4S)-4-hydroxy-2,3,4,5-tetrahydrodipicolinate + NADPH + H(+)</text>
        <dbReference type="Rhea" id="RHEA:35331"/>
        <dbReference type="ChEBI" id="CHEBI:15377"/>
        <dbReference type="ChEBI" id="CHEBI:15378"/>
        <dbReference type="ChEBI" id="CHEBI:16845"/>
        <dbReference type="ChEBI" id="CHEBI:57783"/>
        <dbReference type="ChEBI" id="CHEBI:58349"/>
        <dbReference type="ChEBI" id="CHEBI:67139"/>
        <dbReference type="EC" id="1.17.1.8"/>
    </reaction>
</comment>
<comment type="pathway">
    <text evidence="1">Amino-acid biosynthesis; L-lysine biosynthesis via DAP pathway; (S)-tetrahydrodipicolinate from L-aspartate: step 4/4.</text>
</comment>
<comment type="subcellular location">
    <subcellularLocation>
        <location evidence="1">Cytoplasm</location>
    </subcellularLocation>
</comment>
<comment type="similarity">
    <text evidence="1">Belongs to the DapB family.</text>
</comment>
<comment type="caution">
    <text evidence="2">Was originally thought to be a dihydrodipicolinate reductase (DHDPR), catalyzing the conversion of dihydrodipicolinate to tetrahydrodipicolinate. However, it was shown in E.coli that the substrate of the enzymatic reaction is not dihydrodipicolinate (DHDP) but in fact (2S,4S)-4-hydroxy-2,3,4,5-tetrahydrodipicolinic acid (HTPA), the product released by the DapA-catalyzed reaction.</text>
</comment>
<sequence length="240" mass="26668">MKILLIGYGAMNQRVARLAEEKGHEIVGVIENTPKATTPYQQYQHIADVKDADVAIDFSNPNLLFPLLDEAFHLPLVVATTGEKEKLLNKLDELSKNMPVFFSANMSYGVHALTKILAAAVPLLDDFDIELTEAHHNKKVDAPSGTLEKLYDVIVSLKENVTPVYDRHELNEKRQPQDIGIHSIRGGTIVGEHEVLFAGTDETIQITHRAQSKDIFANGAIQAAERLVNKPNGFYTFDNL</sequence>
<evidence type="ECO:0000255" key="1">
    <source>
        <dbReference type="HAMAP-Rule" id="MF_00102"/>
    </source>
</evidence>
<evidence type="ECO:0000305" key="2"/>
<protein>
    <recommendedName>
        <fullName evidence="1">4-hydroxy-tetrahydrodipicolinate reductase</fullName>
        <shortName evidence="1">HTPA reductase</shortName>
        <ecNumber evidence="1">1.17.1.8</ecNumber>
    </recommendedName>
</protein>
<proteinExistence type="inferred from homology"/>
<reference key="1">
    <citation type="journal article" date="2004" name="Proc. Natl. Acad. Sci. U.S.A.">
        <title>Complete genomes of two clinical Staphylococcus aureus strains: evidence for the rapid evolution of virulence and drug resistance.</title>
        <authorList>
            <person name="Holden M.T.G."/>
            <person name="Feil E.J."/>
            <person name="Lindsay J.A."/>
            <person name="Peacock S.J."/>
            <person name="Day N.P.J."/>
            <person name="Enright M.C."/>
            <person name="Foster T.J."/>
            <person name="Moore C.E."/>
            <person name="Hurst L."/>
            <person name="Atkin R."/>
            <person name="Barron A."/>
            <person name="Bason N."/>
            <person name="Bentley S.D."/>
            <person name="Chillingworth C."/>
            <person name="Chillingworth T."/>
            <person name="Churcher C."/>
            <person name="Clark L."/>
            <person name="Corton C."/>
            <person name="Cronin A."/>
            <person name="Doggett J."/>
            <person name="Dowd L."/>
            <person name="Feltwell T."/>
            <person name="Hance Z."/>
            <person name="Harris B."/>
            <person name="Hauser H."/>
            <person name="Holroyd S."/>
            <person name="Jagels K."/>
            <person name="James K.D."/>
            <person name="Lennard N."/>
            <person name="Line A."/>
            <person name="Mayes R."/>
            <person name="Moule S."/>
            <person name="Mungall K."/>
            <person name="Ormond D."/>
            <person name="Quail M.A."/>
            <person name="Rabbinowitsch E."/>
            <person name="Rutherford K.M."/>
            <person name="Sanders M."/>
            <person name="Sharp S."/>
            <person name="Simmonds M."/>
            <person name="Stevens K."/>
            <person name="Whitehead S."/>
            <person name="Barrell B.G."/>
            <person name="Spratt B.G."/>
            <person name="Parkhill J."/>
        </authorList>
    </citation>
    <scope>NUCLEOTIDE SEQUENCE [LARGE SCALE GENOMIC DNA]</scope>
    <source>
        <strain>MRSA252</strain>
    </source>
</reference>
<name>DAPB_STAAR</name>
<feature type="chain" id="PRO_0000141488" description="4-hydroxy-tetrahydrodipicolinate reductase">
    <location>
        <begin position="1"/>
        <end position="240"/>
    </location>
</feature>
<feature type="active site" description="Proton donor/acceptor" evidence="1">
    <location>
        <position position="135"/>
    </location>
</feature>
<feature type="active site" description="Proton donor" evidence="1">
    <location>
        <position position="139"/>
    </location>
</feature>
<feature type="binding site" evidence="1">
    <location>
        <begin position="79"/>
        <end position="81"/>
    </location>
    <ligand>
        <name>NAD(+)</name>
        <dbReference type="ChEBI" id="CHEBI:57540"/>
    </ligand>
</feature>
<feature type="binding site" evidence="1">
    <location>
        <begin position="103"/>
        <end position="106"/>
    </location>
    <ligand>
        <name>NAD(+)</name>
        <dbReference type="ChEBI" id="CHEBI:57540"/>
    </ligand>
</feature>
<feature type="binding site" evidence="1">
    <location>
        <position position="136"/>
    </location>
    <ligand>
        <name>(S)-2,3,4,5-tetrahydrodipicolinate</name>
        <dbReference type="ChEBI" id="CHEBI:16845"/>
    </ligand>
</feature>
<feature type="binding site" evidence="1">
    <location>
        <begin position="145"/>
        <end position="146"/>
    </location>
    <ligand>
        <name>(S)-2,3,4,5-tetrahydrodipicolinate</name>
        <dbReference type="ChEBI" id="CHEBI:16845"/>
    </ligand>
</feature>
<gene>
    <name evidence="1" type="primary">dapB</name>
    <name type="ordered locus">SAR1408</name>
</gene>
<accession>Q6GH12</accession>
<organism>
    <name type="scientific">Staphylococcus aureus (strain MRSA252)</name>
    <dbReference type="NCBI Taxonomy" id="282458"/>
    <lineage>
        <taxon>Bacteria</taxon>
        <taxon>Bacillati</taxon>
        <taxon>Bacillota</taxon>
        <taxon>Bacilli</taxon>
        <taxon>Bacillales</taxon>
        <taxon>Staphylococcaceae</taxon>
        <taxon>Staphylococcus</taxon>
    </lineage>
</organism>
<dbReference type="EC" id="1.17.1.8" evidence="1"/>
<dbReference type="EMBL" id="BX571856">
    <property type="protein sequence ID" value="CAG40405.1"/>
    <property type="molecule type" value="Genomic_DNA"/>
</dbReference>
<dbReference type="RefSeq" id="WP_000698226.1">
    <property type="nucleotide sequence ID" value="NC_002952.2"/>
</dbReference>
<dbReference type="SMR" id="Q6GH12"/>
<dbReference type="KEGG" id="sar:SAR1408"/>
<dbReference type="HOGENOM" id="CLU_047479_2_2_9"/>
<dbReference type="UniPathway" id="UPA00034">
    <property type="reaction ID" value="UER00018"/>
</dbReference>
<dbReference type="Proteomes" id="UP000000596">
    <property type="component" value="Chromosome"/>
</dbReference>
<dbReference type="GO" id="GO:0005829">
    <property type="term" value="C:cytosol"/>
    <property type="evidence" value="ECO:0007669"/>
    <property type="project" value="TreeGrafter"/>
</dbReference>
<dbReference type="GO" id="GO:0008839">
    <property type="term" value="F:4-hydroxy-tetrahydrodipicolinate reductase"/>
    <property type="evidence" value="ECO:0007669"/>
    <property type="project" value="UniProtKB-EC"/>
</dbReference>
<dbReference type="GO" id="GO:0051287">
    <property type="term" value="F:NAD binding"/>
    <property type="evidence" value="ECO:0007669"/>
    <property type="project" value="UniProtKB-UniRule"/>
</dbReference>
<dbReference type="GO" id="GO:0050661">
    <property type="term" value="F:NADP binding"/>
    <property type="evidence" value="ECO:0007669"/>
    <property type="project" value="UniProtKB-UniRule"/>
</dbReference>
<dbReference type="GO" id="GO:0016726">
    <property type="term" value="F:oxidoreductase activity, acting on CH or CH2 groups, NAD or NADP as acceptor"/>
    <property type="evidence" value="ECO:0007669"/>
    <property type="project" value="UniProtKB-UniRule"/>
</dbReference>
<dbReference type="GO" id="GO:0019877">
    <property type="term" value="P:diaminopimelate biosynthetic process"/>
    <property type="evidence" value="ECO:0007669"/>
    <property type="project" value="UniProtKB-UniRule"/>
</dbReference>
<dbReference type="GO" id="GO:0009089">
    <property type="term" value="P:lysine biosynthetic process via diaminopimelate"/>
    <property type="evidence" value="ECO:0007669"/>
    <property type="project" value="UniProtKB-UniRule"/>
</dbReference>
<dbReference type="CDD" id="cd02274">
    <property type="entry name" value="DHDPR_N"/>
    <property type="match status" value="1"/>
</dbReference>
<dbReference type="FunFam" id="3.30.360.10:FF:000009">
    <property type="entry name" value="4-hydroxy-tetrahydrodipicolinate reductase"/>
    <property type="match status" value="1"/>
</dbReference>
<dbReference type="Gene3D" id="3.30.360.10">
    <property type="entry name" value="Dihydrodipicolinate Reductase, domain 2"/>
    <property type="match status" value="1"/>
</dbReference>
<dbReference type="Gene3D" id="3.40.50.720">
    <property type="entry name" value="NAD(P)-binding Rossmann-like Domain"/>
    <property type="match status" value="1"/>
</dbReference>
<dbReference type="HAMAP" id="MF_00102">
    <property type="entry name" value="DapB"/>
    <property type="match status" value="1"/>
</dbReference>
<dbReference type="InterPro" id="IPR022663">
    <property type="entry name" value="DapB_C"/>
</dbReference>
<dbReference type="InterPro" id="IPR000846">
    <property type="entry name" value="DapB_N"/>
</dbReference>
<dbReference type="InterPro" id="IPR022664">
    <property type="entry name" value="DapB_N_CS"/>
</dbReference>
<dbReference type="InterPro" id="IPR023940">
    <property type="entry name" value="DHDPR_bac"/>
</dbReference>
<dbReference type="InterPro" id="IPR036291">
    <property type="entry name" value="NAD(P)-bd_dom_sf"/>
</dbReference>
<dbReference type="NCBIfam" id="TIGR00036">
    <property type="entry name" value="dapB"/>
    <property type="match status" value="1"/>
</dbReference>
<dbReference type="PANTHER" id="PTHR20836:SF7">
    <property type="entry name" value="4-HYDROXY-TETRAHYDRODIPICOLINATE REDUCTASE"/>
    <property type="match status" value="1"/>
</dbReference>
<dbReference type="PANTHER" id="PTHR20836">
    <property type="entry name" value="DIHYDRODIPICOLINATE REDUCTASE"/>
    <property type="match status" value="1"/>
</dbReference>
<dbReference type="Pfam" id="PF05173">
    <property type="entry name" value="DapB_C"/>
    <property type="match status" value="1"/>
</dbReference>
<dbReference type="Pfam" id="PF01113">
    <property type="entry name" value="DapB_N"/>
    <property type="match status" value="1"/>
</dbReference>
<dbReference type="PIRSF" id="PIRSF000161">
    <property type="entry name" value="DHPR"/>
    <property type="match status" value="1"/>
</dbReference>
<dbReference type="SUPFAM" id="SSF55347">
    <property type="entry name" value="Glyceraldehyde-3-phosphate dehydrogenase-like, C-terminal domain"/>
    <property type="match status" value="1"/>
</dbReference>
<dbReference type="SUPFAM" id="SSF51735">
    <property type="entry name" value="NAD(P)-binding Rossmann-fold domains"/>
    <property type="match status" value="1"/>
</dbReference>
<dbReference type="PROSITE" id="PS01298">
    <property type="entry name" value="DAPB"/>
    <property type="match status" value="1"/>
</dbReference>